<accession>A6QGQ6</accession>
<feature type="chain" id="PRO_1000072989" description="Glycerol-3-phosphate acyltransferase">
    <location>
        <begin position="1"/>
        <end position="202"/>
    </location>
</feature>
<feature type="transmembrane region" description="Helical" evidence="1">
    <location>
        <begin position="2"/>
        <end position="22"/>
    </location>
</feature>
<feature type="transmembrane region" description="Helical" evidence="1">
    <location>
        <begin position="54"/>
        <end position="74"/>
    </location>
</feature>
<feature type="transmembrane region" description="Helical" evidence="1">
    <location>
        <begin position="85"/>
        <end position="105"/>
    </location>
</feature>
<feature type="transmembrane region" description="Helical" evidence="1">
    <location>
        <begin position="120"/>
        <end position="140"/>
    </location>
</feature>
<feature type="transmembrane region" description="Helical" evidence="1">
    <location>
        <begin position="141"/>
        <end position="161"/>
    </location>
</feature>
<feature type="transmembrane region" description="Helical" evidence="1">
    <location>
        <begin position="162"/>
        <end position="182"/>
    </location>
</feature>
<protein>
    <recommendedName>
        <fullName evidence="1">Glycerol-3-phosphate acyltransferase</fullName>
    </recommendedName>
    <alternativeName>
        <fullName evidence="1">Acyl-PO4 G3P acyltransferase</fullName>
    </alternativeName>
    <alternativeName>
        <fullName evidence="1">Acyl-phosphate--glycerol-3-phosphate acyltransferase</fullName>
    </alternativeName>
    <alternativeName>
        <fullName evidence="1">G3P acyltransferase</fullName>
        <shortName evidence="1">GPAT</shortName>
        <ecNumber evidence="1">2.3.1.275</ecNumber>
    </alternativeName>
    <alternativeName>
        <fullName evidence="1">Lysophosphatidic acid synthase</fullName>
        <shortName evidence="1">LPA synthase</shortName>
    </alternativeName>
</protein>
<comment type="function">
    <text evidence="1">Catalyzes the transfer of an acyl group from acyl-phosphate (acyl-PO(4)) to glycerol-3-phosphate (G3P) to form lysophosphatidic acid (LPA). This enzyme utilizes acyl-phosphate as fatty acyl donor, but not acyl-CoA or acyl-ACP.</text>
</comment>
<comment type="catalytic activity">
    <reaction evidence="1">
        <text>an acyl phosphate + sn-glycerol 3-phosphate = a 1-acyl-sn-glycero-3-phosphate + phosphate</text>
        <dbReference type="Rhea" id="RHEA:34075"/>
        <dbReference type="ChEBI" id="CHEBI:43474"/>
        <dbReference type="ChEBI" id="CHEBI:57597"/>
        <dbReference type="ChEBI" id="CHEBI:57970"/>
        <dbReference type="ChEBI" id="CHEBI:59918"/>
        <dbReference type="EC" id="2.3.1.275"/>
    </reaction>
</comment>
<comment type="pathway">
    <text evidence="1">Lipid metabolism; phospholipid metabolism.</text>
</comment>
<comment type="subunit">
    <text evidence="1">Probably interacts with PlsX.</text>
</comment>
<comment type="subcellular location">
    <subcellularLocation>
        <location evidence="1">Cell membrane</location>
        <topology evidence="1">Multi-pass membrane protein</topology>
    </subcellularLocation>
</comment>
<comment type="similarity">
    <text evidence="1">Belongs to the PlsY family.</text>
</comment>
<name>PLSY_STAAE</name>
<reference key="1">
    <citation type="journal article" date="2008" name="J. Bacteriol.">
        <title>Genome sequence of Staphylococcus aureus strain Newman and comparative analysis of staphylococcal genomes: polymorphism and evolution of two major pathogenicity islands.</title>
        <authorList>
            <person name="Baba T."/>
            <person name="Bae T."/>
            <person name="Schneewind O."/>
            <person name="Takeuchi F."/>
            <person name="Hiramatsu K."/>
        </authorList>
    </citation>
    <scope>NUCLEOTIDE SEQUENCE [LARGE SCALE GENOMIC DNA]</scope>
    <source>
        <strain>Newman</strain>
    </source>
</reference>
<gene>
    <name evidence="1" type="primary">plsY</name>
    <name type="ordered locus">NWMN_1266</name>
</gene>
<sequence>MMIIVMLLLSYLIGAFPSGFVIGKLFFKKDIRQFGSGNTGATNSFRVLGRPAGFLVTFLDIFKGFITVFFPLWLQVHADGPISTFFTNGLIVGLFAILGHVYPVYLKFQGGKAVATSAGVVLGVNPILLLILAIIFFIVLKIFKYVSLASIVAAICCVIGSLIIQDYILLVVSFLVSIILIIRHRSNIARIFRGEEPKIKWM</sequence>
<evidence type="ECO:0000255" key="1">
    <source>
        <dbReference type="HAMAP-Rule" id="MF_01043"/>
    </source>
</evidence>
<keyword id="KW-1003">Cell membrane</keyword>
<keyword id="KW-0444">Lipid biosynthesis</keyword>
<keyword id="KW-0443">Lipid metabolism</keyword>
<keyword id="KW-0472">Membrane</keyword>
<keyword id="KW-0594">Phospholipid biosynthesis</keyword>
<keyword id="KW-1208">Phospholipid metabolism</keyword>
<keyword id="KW-0808">Transferase</keyword>
<keyword id="KW-0812">Transmembrane</keyword>
<keyword id="KW-1133">Transmembrane helix</keyword>
<organism>
    <name type="scientific">Staphylococcus aureus (strain Newman)</name>
    <dbReference type="NCBI Taxonomy" id="426430"/>
    <lineage>
        <taxon>Bacteria</taxon>
        <taxon>Bacillati</taxon>
        <taxon>Bacillota</taxon>
        <taxon>Bacilli</taxon>
        <taxon>Bacillales</taxon>
        <taxon>Staphylococcaceae</taxon>
        <taxon>Staphylococcus</taxon>
    </lineage>
</organism>
<dbReference type="EC" id="2.3.1.275" evidence="1"/>
<dbReference type="EMBL" id="AP009351">
    <property type="protein sequence ID" value="BAF67538.1"/>
    <property type="molecule type" value="Genomic_DNA"/>
</dbReference>
<dbReference type="RefSeq" id="WP_000972781.1">
    <property type="nucleotide sequence ID" value="NZ_JBBIAE010000001.1"/>
</dbReference>
<dbReference type="SMR" id="A6QGQ6"/>
<dbReference type="KEGG" id="sae:NWMN_1266"/>
<dbReference type="HOGENOM" id="CLU_081254_4_0_9"/>
<dbReference type="UniPathway" id="UPA00085"/>
<dbReference type="Proteomes" id="UP000006386">
    <property type="component" value="Chromosome"/>
</dbReference>
<dbReference type="GO" id="GO:0005886">
    <property type="term" value="C:plasma membrane"/>
    <property type="evidence" value="ECO:0007669"/>
    <property type="project" value="UniProtKB-SubCell"/>
</dbReference>
<dbReference type="GO" id="GO:0043772">
    <property type="term" value="F:acyl-phosphate glycerol-3-phosphate acyltransferase activity"/>
    <property type="evidence" value="ECO:0007669"/>
    <property type="project" value="UniProtKB-UniRule"/>
</dbReference>
<dbReference type="GO" id="GO:0008654">
    <property type="term" value="P:phospholipid biosynthetic process"/>
    <property type="evidence" value="ECO:0007669"/>
    <property type="project" value="UniProtKB-UniRule"/>
</dbReference>
<dbReference type="HAMAP" id="MF_01043">
    <property type="entry name" value="PlsY"/>
    <property type="match status" value="1"/>
</dbReference>
<dbReference type="InterPro" id="IPR003811">
    <property type="entry name" value="G3P_acylTferase_PlsY"/>
</dbReference>
<dbReference type="NCBIfam" id="TIGR00023">
    <property type="entry name" value="glycerol-3-phosphate 1-O-acyltransferase PlsY"/>
    <property type="match status" value="1"/>
</dbReference>
<dbReference type="PANTHER" id="PTHR30309:SF0">
    <property type="entry name" value="GLYCEROL-3-PHOSPHATE ACYLTRANSFERASE-RELATED"/>
    <property type="match status" value="1"/>
</dbReference>
<dbReference type="PANTHER" id="PTHR30309">
    <property type="entry name" value="INNER MEMBRANE PROTEIN YGIH"/>
    <property type="match status" value="1"/>
</dbReference>
<dbReference type="Pfam" id="PF02660">
    <property type="entry name" value="G3P_acyltransf"/>
    <property type="match status" value="1"/>
</dbReference>
<dbReference type="SMART" id="SM01207">
    <property type="entry name" value="G3P_acyltransf"/>
    <property type="match status" value="1"/>
</dbReference>
<proteinExistence type="inferred from homology"/>